<dbReference type="EC" id="7.1.1.-"/>
<dbReference type="EMBL" id="EU325680">
    <property type="protein sequence ID" value="ACF08684.1"/>
    <property type="molecule type" value="Genomic_DNA"/>
</dbReference>
<dbReference type="RefSeq" id="YP_002000532.1">
    <property type="nucleotide sequence ID" value="NC_011032.1"/>
</dbReference>
<dbReference type="SMR" id="B3TN96"/>
<dbReference type="FunCoup" id="B3TN96">
    <property type="interactions" value="3"/>
</dbReference>
<dbReference type="STRING" id="15368.B3TN96"/>
<dbReference type="GeneID" id="6439789"/>
<dbReference type="KEGG" id="bdi:6439789"/>
<dbReference type="InParanoid" id="B3TN96"/>
<dbReference type="Proteomes" id="UP000008810">
    <property type="component" value="Chloroplast"/>
</dbReference>
<dbReference type="ExpressionAtlas" id="B3TN96">
    <property type="expression patterns" value="differential"/>
</dbReference>
<dbReference type="GO" id="GO:0009535">
    <property type="term" value="C:chloroplast thylakoid membrane"/>
    <property type="evidence" value="ECO:0007669"/>
    <property type="project" value="UniProtKB-SubCell"/>
</dbReference>
<dbReference type="GO" id="GO:0008137">
    <property type="term" value="F:NADH dehydrogenase (ubiquinone) activity"/>
    <property type="evidence" value="ECO:0007669"/>
    <property type="project" value="InterPro"/>
</dbReference>
<dbReference type="GO" id="GO:0048038">
    <property type="term" value="F:quinone binding"/>
    <property type="evidence" value="ECO:0007669"/>
    <property type="project" value="UniProtKB-KW"/>
</dbReference>
<dbReference type="GO" id="GO:0042773">
    <property type="term" value="P:ATP synthesis coupled electron transport"/>
    <property type="evidence" value="ECO:0007669"/>
    <property type="project" value="InterPro"/>
</dbReference>
<dbReference type="GO" id="GO:0015990">
    <property type="term" value="P:electron transport coupled proton transport"/>
    <property type="evidence" value="ECO:0000318"/>
    <property type="project" value="GO_Central"/>
</dbReference>
<dbReference type="Gene3D" id="1.20.5.2700">
    <property type="match status" value="1"/>
</dbReference>
<dbReference type="InterPro" id="IPR002128">
    <property type="entry name" value="NADH_UbQ_OxRdtase_chlpt_su5_C"/>
</dbReference>
<dbReference type="InterPro" id="IPR018393">
    <property type="entry name" value="NADHpl_OxRdtase_5_subgr"/>
</dbReference>
<dbReference type="InterPro" id="IPR001750">
    <property type="entry name" value="ND/Mrp_TM"/>
</dbReference>
<dbReference type="InterPro" id="IPR003945">
    <property type="entry name" value="NU5C-like"/>
</dbReference>
<dbReference type="InterPro" id="IPR001516">
    <property type="entry name" value="Proton_antipo_N"/>
</dbReference>
<dbReference type="NCBIfam" id="TIGR01974">
    <property type="entry name" value="NDH_I_L"/>
    <property type="match status" value="1"/>
</dbReference>
<dbReference type="NCBIfam" id="NF005141">
    <property type="entry name" value="PRK06590.1"/>
    <property type="match status" value="1"/>
</dbReference>
<dbReference type="PANTHER" id="PTHR42829">
    <property type="entry name" value="NADH-UBIQUINONE OXIDOREDUCTASE CHAIN 5"/>
    <property type="match status" value="1"/>
</dbReference>
<dbReference type="PANTHER" id="PTHR42829:SF2">
    <property type="entry name" value="NADH-UBIQUINONE OXIDOREDUCTASE CHAIN 5"/>
    <property type="match status" value="1"/>
</dbReference>
<dbReference type="Pfam" id="PF01010">
    <property type="entry name" value="Proton_antipo_C"/>
    <property type="match status" value="1"/>
</dbReference>
<dbReference type="Pfam" id="PF00361">
    <property type="entry name" value="Proton_antipo_M"/>
    <property type="match status" value="1"/>
</dbReference>
<dbReference type="Pfam" id="PF00662">
    <property type="entry name" value="Proton_antipo_N"/>
    <property type="match status" value="1"/>
</dbReference>
<dbReference type="PRINTS" id="PR01434">
    <property type="entry name" value="NADHDHGNASE5"/>
</dbReference>
<dbReference type="PRINTS" id="PR01435">
    <property type="entry name" value="NPOXDRDTASE5"/>
</dbReference>
<organism>
    <name type="scientific">Brachypodium distachyon</name>
    <name type="common">Purple false brome</name>
    <name type="synonym">Trachynia distachya</name>
    <dbReference type="NCBI Taxonomy" id="15368"/>
    <lineage>
        <taxon>Eukaryota</taxon>
        <taxon>Viridiplantae</taxon>
        <taxon>Streptophyta</taxon>
        <taxon>Embryophyta</taxon>
        <taxon>Tracheophyta</taxon>
        <taxon>Spermatophyta</taxon>
        <taxon>Magnoliopsida</taxon>
        <taxon>Liliopsida</taxon>
        <taxon>Poales</taxon>
        <taxon>Poaceae</taxon>
        <taxon>BOP clade</taxon>
        <taxon>Pooideae</taxon>
        <taxon>Stipodae</taxon>
        <taxon>Brachypodieae</taxon>
        <taxon>Brachypodium</taxon>
    </lineage>
</organism>
<protein>
    <recommendedName>
        <fullName>NAD(P)H-quinone oxidoreductase subunit 5, chloroplastic</fullName>
        <ecNumber>7.1.1.-</ecNumber>
    </recommendedName>
    <alternativeName>
        <fullName>NAD(P)H dehydrogenase subunit 5</fullName>
    </alternativeName>
    <alternativeName>
        <fullName>NADH-plastoquinone oxidoreductase subunit 5</fullName>
    </alternativeName>
</protein>
<gene>
    <name type="primary">ndhF</name>
</gene>
<evidence type="ECO:0000250" key="1"/>
<evidence type="ECO:0000255" key="2"/>
<evidence type="ECO:0000305" key="3"/>
<feature type="chain" id="PRO_0000360913" description="NAD(P)H-quinone oxidoreductase subunit 5, chloroplastic">
    <location>
        <begin position="1"/>
        <end position="741"/>
    </location>
</feature>
<feature type="transmembrane region" description="Helical" evidence="2">
    <location>
        <begin position="9"/>
        <end position="29"/>
    </location>
</feature>
<feature type="transmembrane region" description="Helical" evidence="2">
    <location>
        <begin position="39"/>
        <end position="59"/>
    </location>
</feature>
<feature type="transmembrane region" description="Helical" evidence="2">
    <location>
        <begin position="89"/>
        <end position="109"/>
    </location>
</feature>
<feature type="transmembrane region" description="Helical" evidence="2">
    <location>
        <begin position="125"/>
        <end position="145"/>
    </location>
</feature>
<feature type="transmembrane region" description="Helical" evidence="2">
    <location>
        <begin position="147"/>
        <end position="167"/>
    </location>
</feature>
<feature type="transmembrane region" description="Helical" evidence="2">
    <location>
        <begin position="184"/>
        <end position="204"/>
    </location>
</feature>
<feature type="transmembrane region" description="Helical" evidence="2">
    <location>
        <begin position="216"/>
        <end position="238"/>
    </location>
</feature>
<feature type="transmembrane region" description="Helical" evidence="2">
    <location>
        <begin position="258"/>
        <end position="278"/>
    </location>
</feature>
<feature type="transmembrane region" description="Helical" evidence="2">
    <location>
        <begin position="280"/>
        <end position="300"/>
    </location>
</feature>
<feature type="transmembrane region" description="Helical" evidence="2">
    <location>
        <begin position="327"/>
        <end position="347"/>
    </location>
</feature>
<feature type="transmembrane region" description="Helical" evidence="2">
    <location>
        <begin position="354"/>
        <end position="374"/>
    </location>
</feature>
<feature type="transmembrane region" description="Helical" evidence="2">
    <location>
        <begin position="396"/>
        <end position="416"/>
    </location>
</feature>
<feature type="transmembrane region" description="Helical" evidence="2">
    <location>
        <begin position="425"/>
        <end position="445"/>
    </location>
</feature>
<feature type="transmembrane region" description="Helical" evidence="2">
    <location>
        <begin position="544"/>
        <end position="564"/>
    </location>
</feature>
<feature type="transmembrane region" description="Helical" evidence="2">
    <location>
        <begin position="612"/>
        <end position="632"/>
    </location>
</feature>
<feature type="transmembrane region" description="Helical" evidence="2">
    <location>
        <begin position="721"/>
        <end position="741"/>
    </location>
</feature>
<geneLocation type="chloroplast"/>
<proteinExistence type="inferred from homology"/>
<sequence length="741" mass="83410">MEHTYQYAWVIPLLPLPVILSMGFGLFLIPIATKNFRRIWAFPSVLLLSIAMVFSVQLSIQQINGSSIYQYLWSWTINNDFSLEFGYLIDPLTSIMLMLITTVGILVLIYSDGYMSHDEGYLRFFIYISFFNISMLGLVTSSNLIQIYFFWELVGMCSYLLIGFWFTRPIAASACQKAFVTNRIGDFGLLLGILGFFWITGSLEFRDLFQTANNWIPNNGTTSLLTTLCAFLLFLGAVAKSAQFPLHVWLPDAMEGPTPISALIHAATMVAAGIFLLARLLPLFISLPLIMTFISLVGTITLFLGATLALAQRDIKRTLAYSTMSQLGYMMLALGIGSYQAALFHLITHAYSKALLFLGSGSIIHSMEPLVGYSPDKSQNMALMGGLRKYIPITRTAFLWGTLSICGIPPLACFWSKDEILSNSWLYSPFFGIIASFTAGLTAFYMFRIYLLTFDGYFRFHFQNYSSTKEGSLYSISLWGNRIPKGVSKDFVLSTTKSEVYFFSQNISISKGQGNTRNRIESFSTSFGSKNVFTYPHETGNTMLFPLLILLLFTFFIGFIGIPFDNETMDNGIAGVTILSKWLIPSINFTQESSNSSINSYEFITNAISSVSLVILGLFIAYIFYGSAYSFFQNLDLQNSFYKGSPKKNFFYQVKKKIYSWSYNRGYIDIFYSRLFTLGIRGLTELTEFFDKGVIDGITNGVGLASFCIGEEIKYVGGGRISSYLFFFLCYVSVFLFFFLS</sequence>
<accession>B3TN96</accession>
<keyword id="KW-0150">Chloroplast</keyword>
<keyword id="KW-0472">Membrane</keyword>
<keyword id="KW-0520">NAD</keyword>
<keyword id="KW-0521">NADP</keyword>
<keyword id="KW-0934">Plastid</keyword>
<keyword id="KW-0618">Plastoquinone</keyword>
<keyword id="KW-0874">Quinone</keyword>
<keyword id="KW-1185">Reference proteome</keyword>
<keyword id="KW-0793">Thylakoid</keyword>
<keyword id="KW-1278">Translocase</keyword>
<keyword id="KW-0812">Transmembrane</keyword>
<keyword id="KW-1133">Transmembrane helix</keyword>
<keyword id="KW-0813">Transport</keyword>
<comment type="function">
    <text evidence="1">NDH shuttles electrons from NAD(P)H:plastoquinone, via FMN and iron-sulfur (Fe-S) centers, to quinones in the photosynthetic chain and possibly in a chloroplast respiratory chain. The immediate electron acceptor for the enzyme in this species is believed to be plastoquinone. Couples the redox reaction to proton translocation, and thus conserves the redox energy in a proton gradient (By similarity).</text>
</comment>
<comment type="catalytic activity">
    <reaction>
        <text>a plastoquinone + NADH + (n+1) H(+)(in) = a plastoquinol + NAD(+) + n H(+)(out)</text>
        <dbReference type="Rhea" id="RHEA:42608"/>
        <dbReference type="Rhea" id="RHEA-COMP:9561"/>
        <dbReference type="Rhea" id="RHEA-COMP:9562"/>
        <dbReference type="ChEBI" id="CHEBI:15378"/>
        <dbReference type="ChEBI" id="CHEBI:17757"/>
        <dbReference type="ChEBI" id="CHEBI:57540"/>
        <dbReference type="ChEBI" id="CHEBI:57945"/>
        <dbReference type="ChEBI" id="CHEBI:62192"/>
    </reaction>
</comment>
<comment type="catalytic activity">
    <reaction>
        <text>a plastoquinone + NADPH + (n+1) H(+)(in) = a plastoquinol + NADP(+) + n H(+)(out)</text>
        <dbReference type="Rhea" id="RHEA:42612"/>
        <dbReference type="Rhea" id="RHEA-COMP:9561"/>
        <dbReference type="Rhea" id="RHEA-COMP:9562"/>
        <dbReference type="ChEBI" id="CHEBI:15378"/>
        <dbReference type="ChEBI" id="CHEBI:17757"/>
        <dbReference type="ChEBI" id="CHEBI:57783"/>
        <dbReference type="ChEBI" id="CHEBI:58349"/>
        <dbReference type="ChEBI" id="CHEBI:62192"/>
    </reaction>
</comment>
<comment type="subunit">
    <text evidence="1">NDH is composed of at least 16 different subunits, 5 of which are encoded in the nucleus.</text>
</comment>
<comment type="subcellular location">
    <subcellularLocation>
        <location evidence="1">Plastid</location>
        <location evidence="1">Chloroplast thylakoid membrane</location>
        <topology evidence="1">Multi-pass membrane protein</topology>
    </subcellularLocation>
</comment>
<comment type="similarity">
    <text evidence="3">Belongs to the complex I subunit 5 family.</text>
</comment>
<reference key="1">
    <citation type="journal article" date="2008" name="BMC Res. Notes">
        <title>The complete chloroplast genome sequence of Brachypodium distachyon: sequence comparison and phylogenetic analysis of eight grass plastomes.</title>
        <authorList>
            <person name="Bortiri E."/>
            <person name="Coleman-Derr D."/>
            <person name="Lazo G.R."/>
            <person name="Anderson O.D."/>
            <person name="Gu Y.Q."/>
        </authorList>
    </citation>
    <scope>NUCLEOTIDE SEQUENCE [LARGE SCALE GENOMIC DNA]</scope>
    <source>
        <strain>cv. Bd21</strain>
    </source>
</reference>
<name>NU5C_BRADI</name>